<sequence>MSLITVENLSVRYGANTVLRNVALTVEPGEIVTIVGPNGSGKTSLLKAIIGAARPAAGQVTLRPGLRIGYVPQRLHIDATLPITVERFMGLTARVTREDCMAALKIAAVPDLLKRQMSQLSGGQFQRVLLARALINKPDVLLLDEATQGLDQPGSAAFYRQIEDVRRETGCAVLMISHELHVVMSASDRVICLNGHVCCAGTPAVVASAPEYRALFGTGTGGALALYRHDHDHNHDHDHEAAE</sequence>
<comment type="function">
    <text evidence="1">Part of the ABC transporter complex ZnuABC involved in zinc import. Responsible for energy coupling to the transport system.</text>
</comment>
<comment type="catalytic activity">
    <reaction evidence="1">
        <text>Zn(2+)(out) + ATP(in) + H2O(in) = Zn(2+)(in) + ADP(in) + phosphate(in) + H(+)(in)</text>
        <dbReference type="Rhea" id="RHEA:29795"/>
        <dbReference type="ChEBI" id="CHEBI:15377"/>
        <dbReference type="ChEBI" id="CHEBI:15378"/>
        <dbReference type="ChEBI" id="CHEBI:29105"/>
        <dbReference type="ChEBI" id="CHEBI:30616"/>
        <dbReference type="ChEBI" id="CHEBI:43474"/>
        <dbReference type="ChEBI" id="CHEBI:456216"/>
        <dbReference type="EC" id="7.2.2.20"/>
    </reaction>
</comment>
<comment type="subunit">
    <text evidence="1">The complex is composed of two ATP-binding proteins (ZnuC), two transmembrane proteins (ZnuB) and a solute-binding protein (ZnuA).</text>
</comment>
<comment type="subcellular location">
    <subcellularLocation>
        <location evidence="1">Cell inner membrane</location>
        <topology evidence="1">Peripheral membrane protein</topology>
    </subcellularLocation>
</comment>
<comment type="similarity">
    <text evidence="1">Belongs to the ABC transporter superfamily. Zinc importer (TC 3.A.1.15.5) family.</text>
</comment>
<evidence type="ECO:0000255" key="1">
    <source>
        <dbReference type="HAMAP-Rule" id="MF_01725"/>
    </source>
</evidence>
<reference key="1">
    <citation type="submission" date="2006-02" db="EMBL/GenBank/DDBJ databases">
        <title>Complete sequence of chromosome of Jannaschia sp. CCS1.</title>
        <authorList>
            <consortium name="US DOE Joint Genome Institute"/>
            <person name="Copeland A."/>
            <person name="Lucas S."/>
            <person name="Lapidus A."/>
            <person name="Barry K."/>
            <person name="Detter J.C."/>
            <person name="Glavina del Rio T."/>
            <person name="Hammon N."/>
            <person name="Israni S."/>
            <person name="Pitluck S."/>
            <person name="Brettin T."/>
            <person name="Bruce D."/>
            <person name="Han C."/>
            <person name="Tapia R."/>
            <person name="Gilna P."/>
            <person name="Chertkov O."/>
            <person name="Saunders E."/>
            <person name="Schmutz J."/>
            <person name="Larimer F."/>
            <person name="Land M."/>
            <person name="Kyrpides N."/>
            <person name="Lykidis A."/>
            <person name="Moran M.A."/>
            <person name="Belas R."/>
            <person name="Ye W."/>
            <person name="Buchan A."/>
            <person name="Gonzalez J.M."/>
            <person name="Schell M.A."/>
            <person name="Richardson P."/>
        </authorList>
    </citation>
    <scope>NUCLEOTIDE SEQUENCE [LARGE SCALE GENOMIC DNA]</scope>
    <source>
        <strain>CCS1</strain>
    </source>
</reference>
<protein>
    <recommendedName>
        <fullName evidence="1">Zinc import ATP-binding protein ZnuC</fullName>
        <ecNumber evidence="1">7.2.2.20</ecNumber>
    </recommendedName>
</protein>
<accession>Q28VN1</accession>
<proteinExistence type="inferred from homology"/>
<name>ZNUC_JANSC</name>
<dbReference type="EC" id="7.2.2.20" evidence="1"/>
<dbReference type="EMBL" id="CP000264">
    <property type="protein sequence ID" value="ABD53231.1"/>
    <property type="molecule type" value="Genomic_DNA"/>
</dbReference>
<dbReference type="RefSeq" id="WP_011453440.1">
    <property type="nucleotide sequence ID" value="NC_007802.1"/>
</dbReference>
<dbReference type="SMR" id="Q28VN1"/>
<dbReference type="STRING" id="290400.Jann_0314"/>
<dbReference type="KEGG" id="jan:Jann_0314"/>
<dbReference type="eggNOG" id="COG1121">
    <property type="taxonomic scope" value="Bacteria"/>
</dbReference>
<dbReference type="HOGENOM" id="CLU_000604_1_11_5"/>
<dbReference type="OrthoDB" id="9806726at2"/>
<dbReference type="Proteomes" id="UP000008326">
    <property type="component" value="Chromosome"/>
</dbReference>
<dbReference type="GO" id="GO:0005886">
    <property type="term" value="C:plasma membrane"/>
    <property type="evidence" value="ECO:0007669"/>
    <property type="project" value="UniProtKB-SubCell"/>
</dbReference>
<dbReference type="GO" id="GO:0015633">
    <property type="term" value="F:ABC-type zinc transporter activity"/>
    <property type="evidence" value="ECO:0007669"/>
    <property type="project" value="UniProtKB-EC"/>
</dbReference>
<dbReference type="GO" id="GO:0005524">
    <property type="term" value="F:ATP binding"/>
    <property type="evidence" value="ECO:0007669"/>
    <property type="project" value="UniProtKB-KW"/>
</dbReference>
<dbReference type="GO" id="GO:0016887">
    <property type="term" value="F:ATP hydrolysis activity"/>
    <property type="evidence" value="ECO:0007669"/>
    <property type="project" value="InterPro"/>
</dbReference>
<dbReference type="GO" id="GO:0010043">
    <property type="term" value="P:response to zinc ion"/>
    <property type="evidence" value="ECO:0007669"/>
    <property type="project" value="TreeGrafter"/>
</dbReference>
<dbReference type="CDD" id="cd03235">
    <property type="entry name" value="ABC_Metallic_Cations"/>
    <property type="match status" value="1"/>
</dbReference>
<dbReference type="Gene3D" id="3.40.50.300">
    <property type="entry name" value="P-loop containing nucleotide triphosphate hydrolases"/>
    <property type="match status" value="1"/>
</dbReference>
<dbReference type="InterPro" id="IPR003593">
    <property type="entry name" value="AAA+_ATPase"/>
</dbReference>
<dbReference type="InterPro" id="IPR003439">
    <property type="entry name" value="ABC_transporter-like_ATP-bd"/>
</dbReference>
<dbReference type="InterPro" id="IPR017871">
    <property type="entry name" value="ABC_transporter-like_CS"/>
</dbReference>
<dbReference type="InterPro" id="IPR050153">
    <property type="entry name" value="Metal_Ion_Import_ABC"/>
</dbReference>
<dbReference type="InterPro" id="IPR027417">
    <property type="entry name" value="P-loop_NTPase"/>
</dbReference>
<dbReference type="PANTHER" id="PTHR42734">
    <property type="entry name" value="METAL TRANSPORT SYSTEM ATP-BINDING PROTEIN TM_0124-RELATED"/>
    <property type="match status" value="1"/>
</dbReference>
<dbReference type="PANTHER" id="PTHR42734:SF9">
    <property type="entry name" value="ZINC IMPORT ATP-BINDING PROTEIN ZNUC"/>
    <property type="match status" value="1"/>
</dbReference>
<dbReference type="Pfam" id="PF00005">
    <property type="entry name" value="ABC_tran"/>
    <property type="match status" value="1"/>
</dbReference>
<dbReference type="SMART" id="SM00382">
    <property type="entry name" value="AAA"/>
    <property type="match status" value="1"/>
</dbReference>
<dbReference type="SUPFAM" id="SSF52540">
    <property type="entry name" value="P-loop containing nucleoside triphosphate hydrolases"/>
    <property type="match status" value="1"/>
</dbReference>
<dbReference type="PROSITE" id="PS00211">
    <property type="entry name" value="ABC_TRANSPORTER_1"/>
    <property type="match status" value="1"/>
</dbReference>
<dbReference type="PROSITE" id="PS50893">
    <property type="entry name" value="ABC_TRANSPORTER_2"/>
    <property type="match status" value="1"/>
</dbReference>
<dbReference type="PROSITE" id="PS51298">
    <property type="entry name" value="ZNUC"/>
    <property type="match status" value="1"/>
</dbReference>
<feature type="chain" id="PRO_0000281514" description="Zinc import ATP-binding protein ZnuC">
    <location>
        <begin position="1"/>
        <end position="243"/>
    </location>
</feature>
<feature type="domain" description="ABC transporter" evidence="1">
    <location>
        <begin position="4"/>
        <end position="219"/>
    </location>
</feature>
<feature type="binding site" evidence="1">
    <location>
        <begin position="36"/>
        <end position="43"/>
    </location>
    <ligand>
        <name>ATP</name>
        <dbReference type="ChEBI" id="CHEBI:30616"/>
    </ligand>
</feature>
<gene>
    <name evidence="1" type="primary">znuC</name>
    <name type="ordered locus">Jann_0314</name>
</gene>
<organism>
    <name type="scientific">Jannaschia sp. (strain CCS1)</name>
    <dbReference type="NCBI Taxonomy" id="290400"/>
    <lineage>
        <taxon>Bacteria</taxon>
        <taxon>Pseudomonadati</taxon>
        <taxon>Pseudomonadota</taxon>
        <taxon>Alphaproteobacteria</taxon>
        <taxon>Rhodobacterales</taxon>
        <taxon>Roseobacteraceae</taxon>
        <taxon>Jannaschia</taxon>
    </lineage>
</organism>
<keyword id="KW-0067">ATP-binding</keyword>
<keyword id="KW-0997">Cell inner membrane</keyword>
<keyword id="KW-1003">Cell membrane</keyword>
<keyword id="KW-0406">Ion transport</keyword>
<keyword id="KW-0472">Membrane</keyword>
<keyword id="KW-0547">Nucleotide-binding</keyword>
<keyword id="KW-1185">Reference proteome</keyword>
<keyword id="KW-1278">Translocase</keyword>
<keyword id="KW-0813">Transport</keyword>
<keyword id="KW-0862">Zinc</keyword>
<keyword id="KW-0864">Zinc transport</keyword>